<organism>
    <name type="scientific">Oryctolagus cuniculus</name>
    <name type="common">Rabbit</name>
    <dbReference type="NCBI Taxonomy" id="9986"/>
    <lineage>
        <taxon>Eukaryota</taxon>
        <taxon>Metazoa</taxon>
        <taxon>Chordata</taxon>
        <taxon>Craniata</taxon>
        <taxon>Vertebrata</taxon>
        <taxon>Euteleostomi</taxon>
        <taxon>Mammalia</taxon>
        <taxon>Eutheria</taxon>
        <taxon>Euarchontoglires</taxon>
        <taxon>Glires</taxon>
        <taxon>Lagomorpha</taxon>
        <taxon>Leporidae</taxon>
        <taxon>Oryctolagus</taxon>
    </lineage>
</organism>
<accession>P31661</accession>
<sequence length="635" mass="70484">MAKKSAENGIYSVSGDEKKGPLIAPGPDGAPAKGDGPAGLGAPGGCLAVPPRETWTRQMDFIMSCVGFAVGLGNVWRFPYLCYKNGGGVFLIPYVLIALVGGIPIFFLEISLGQFMKAGSINVWNICPLFKGLGYASMVIVFYCNTYYIMVLAWGFYYLVKSFTTTLPWATCGHTWNTPDCVEIFRHEDCANGSLANLTCDQLAERRSPVIEFWENKVLRLSGGLEVPGALNSEVTLCLLACWVLVYFCVWKGVKSTGKIVYFTATFPYVVLVVLLVRGVLLPGALDGIIYYLKPDWSKLRSPQVWIDAGTQIFFSYAIGLGALTALGSYNRFNNNCYKDAIILALINSGTSFFAGFVVFSILGFMATEQGVHISKVAESGPGLAFIAYPRAVTLMPVAPLWAALFFFMLLLLGLDSQFVGVEGFITGLLDLLPASYYFRFQREISVALCCALCFVIDLSMVQMAGMYVFQLFDYYSASGTTLLWQAFWECVAVAWVYGADRFMDDIACMIGYRPCPWMKWCWSFFTPLVCMGIFIFNIVYYKPLVYNKTYVYPWWGEAMGWAFALSSMLCVPLHLLGCLLRAKGTMAERWQHLTQPVWGLHHLEYRAQDADVRGLTTLTPVSESSKVVVVESVM</sequence>
<reference key="1">
    <citation type="journal article" date="1993" name="J. Biol. Chem.">
        <title>A Na(+)-dependent creatine transporter in rabbit brain, muscle, heart, and kidney. cDNA cloning and functional expression.</title>
        <authorList>
            <person name="Guimbal C."/>
            <person name="Kilimann M.W."/>
        </authorList>
    </citation>
    <scope>NUCLEOTIDE SEQUENCE [MRNA]</scope>
    <scope>FUNCTION</scope>
    <scope>CATALYTIC ACTIVITY</scope>
    <scope>BIOPHYSICOCHEMICAL PROPERTIES</scope>
    <scope>TISSUE SPECIFICITY</scope>
    <source>
        <tissue>Brain</tissue>
        <tissue>Muscle</tissue>
    </source>
</reference>
<feature type="chain" id="PRO_0000214776" description="Sodium- and chloride-dependent creatine transporter 1">
    <location>
        <begin position="1"/>
        <end position="635"/>
    </location>
</feature>
<feature type="topological domain" description="Cytoplasmic" evidence="3">
    <location>
        <begin position="1"/>
        <end position="60"/>
    </location>
</feature>
<feature type="transmembrane region" description="Helical" evidence="3">
    <location>
        <begin position="61"/>
        <end position="81"/>
    </location>
</feature>
<feature type="topological domain" description="Extracellular" evidence="3">
    <location>
        <begin position="82"/>
        <end position="87"/>
    </location>
</feature>
<feature type="transmembrane region" description="Helical" evidence="3">
    <location>
        <begin position="88"/>
        <end position="108"/>
    </location>
</feature>
<feature type="topological domain" description="Cytoplasmic" evidence="3">
    <location>
        <begin position="109"/>
        <end position="138"/>
    </location>
</feature>
<feature type="transmembrane region" description="Helical" evidence="3">
    <location>
        <begin position="139"/>
        <end position="159"/>
    </location>
</feature>
<feature type="topological domain" description="Extracellular" evidence="3">
    <location>
        <begin position="160"/>
        <end position="230"/>
    </location>
</feature>
<feature type="transmembrane region" description="Helical" evidence="3">
    <location>
        <begin position="231"/>
        <end position="251"/>
    </location>
</feature>
<feature type="topological domain" description="Cytoplasmic" evidence="3">
    <location>
        <begin position="252"/>
        <end position="269"/>
    </location>
</feature>
<feature type="transmembrane region" description="Helical" evidence="3">
    <location>
        <begin position="270"/>
        <end position="290"/>
    </location>
</feature>
<feature type="topological domain" description="Extracellular" evidence="3">
    <location>
        <begin position="291"/>
        <end position="304"/>
    </location>
</feature>
<feature type="transmembrane region" description="Helical" evidence="3">
    <location>
        <begin position="305"/>
        <end position="325"/>
    </location>
</feature>
<feature type="topological domain" description="Cytoplasmic" evidence="3">
    <location>
        <begin position="326"/>
        <end position="341"/>
    </location>
</feature>
<feature type="transmembrane region" description="Helical" evidence="3">
    <location>
        <begin position="342"/>
        <end position="362"/>
    </location>
</feature>
<feature type="topological domain" description="Extracellular" evidence="3">
    <location>
        <begin position="363"/>
        <end position="394"/>
    </location>
</feature>
<feature type="transmembrane region" description="Helical" evidence="3">
    <location>
        <begin position="395"/>
        <end position="415"/>
    </location>
</feature>
<feature type="topological domain" description="Cytoplasmic" evidence="3">
    <location>
        <begin position="416"/>
        <end position="444"/>
    </location>
</feature>
<feature type="transmembrane region" description="Helical" evidence="3">
    <location>
        <begin position="445"/>
        <end position="465"/>
    </location>
</feature>
<feature type="topological domain" description="Extracellular" evidence="3">
    <location>
        <begin position="466"/>
        <end position="479"/>
    </location>
</feature>
<feature type="transmembrane region" description="Helical" evidence="3">
    <location>
        <begin position="480"/>
        <end position="500"/>
    </location>
</feature>
<feature type="topological domain" description="Cytoplasmic" evidence="3">
    <location>
        <begin position="501"/>
        <end position="520"/>
    </location>
</feature>
<feature type="transmembrane region" description="Helical" evidence="3">
    <location>
        <begin position="521"/>
        <end position="541"/>
    </location>
</feature>
<feature type="topological domain" description="Extracellular" evidence="3">
    <location>
        <begin position="542"/>
        <end position="560"/>
    </location>
</feature>
<feature type="transmembrane region" description="Helical" evidence="3">
    <location>
        <begin position="561"/>
        <end position="581"/>
    </location>
</feature>
<feature type="topological domain" description="Cytoplasmic" evidence="3">
    <location>
        <begin position="582"/>
        <end position="635"/>
    </location>
</feature>
<feature type="region of interest" description="Disordered" evidence="4">
    <location>
        <begin position="1"/>
        <end position="35"/>
    </location>
</feature>
<feature type="compositionally biased region" description="Low complexity" evidence="4">
    <location>
        <begin position="25"/>
        <end position="35"/>
    </location>
</feature>
<feature type="modified residue" description="Phosphothreonine" evidence="1">
    <location>
        <position position="617"/>
    </location>
</feature>
<feature type="modified residue" description="Phosphothreonine" evidence="1">
    <location>
        <position position="620"/>
    </location>
</feature>
<feature type="modified residue" description="Phosphoserine" evidence="2">
    <location>
        <position position="623"/>
    </location>
</feature>
<feature type="glycosylation site" description="N-linked (GlcNAc...) asparagine" evidence="3">
    <location>
        <position position="192"/>
    </location>
</feature>
<feature type="glycosylation site" description="N-linked (GlcNAc...) asparagine" evidence="3">
    <location>
        <position position="197"/>
    </location>
</feature>
<feature type="glycosylation site" description="N-linked (GlcNAc...) asparagine" evidence="3">
    <location>
        <position position="548"/>
    </location>
</feature>
<dbReference type="EMBL" id="X67252">
    <property type="protein sequence ID" value="CAA47674.1"/>
    <property type="molecule type" value="mRNA"/>
</dbReference>
<dbReference type="PIR" id="A46061">
    <property type="entry name" value="A46061"/>
</dbReference>
<dbReference type="RefSeq" id="NP_001075866.1">
    <property type="nucleotide sequence ID" value="NM_001082397.1"/>
</dbReference>
<dbReference type="SMR" id="P31661"/>
<dbReference type="FunCoup" id="P31661">
    <property type="interactions" value="7"/>
</dbReference>
<dbReference type="STRING" id="9986.ENSOCUP00000015649"/>
<dbReference type="TCDB" id="2.A.22.3.4">
    <property type="family name" value="the neurotransmitter:sodium symporter (nss) family"/>
</dbReference>
<dbReference type="GlyCosmos" id="P31661">
    <property type="glycosylation" value="3 sites, No reported glycans"/>
</dbReference>
<dbReference type="PaxDb" id="9986-ENSOCUP00000015649"/>
<dbReference type="GeneID" id="100009280"/>
<dbReference type="KEGG" id="ocu:100009280"/>
<dbReference type="CTD" id="6535"/>
<dbReference type="eggNOG" id="KOG3660">
    <property type="taxonomic scope" value="Eukaryota"/>
</dbReference>
<dbReference type="InParanoid" id="P31661"/>
<dbReference type="OrthoDB" id="6581954at2759"/>
<dbReference type="Proteomes" id="UP000001811">
    <property type="component" value="Unplaced"/>
</dbReference>
<dbReference type="GO" id="GO:0016324">
    <property type="term" value="C:apical plasma membrane"/>
    <property type="evidence" value="ECO:0007669"/>
    <property type="project" value="UniProtKB-SubCell"/>
</dbReference>
<dbReference type="GO" id="GO:0005309">
    <property type="term" value="F:creatine:sodium symporter activity"/>
    <property type="evidence" value="ECO:0000314"/>
    <property type="project" value="UniProtKB"/>
</dbReference>
<dbReference type="GO" id="GO:0005332">
    <property type="term" value="F:gamma-aminobutyric acid:sodium:chloride symporter activity"/>
    <property type="evidence" value="ECO:0007669"/>
    <property type="project" value="TreeGrafter"/>
</dbReference>
<dbReference type="GO" id="GO:0015881">
    <property type="term" value="P:creatine transmembrane transport"/>
    <property type="evidence" value="ECO:0000250"/>
    <property type="project" value="UniProtKB"/>
</dbReference>
<dbReference type="GO" id="GO:0006836">
    <property type="term" value="P:neurotransmitter transport"/>
    <property type="evidence" value="ECO:0007669"/>
    <property type="project" value="InterPro"/>
</dbReference>
<dbReference type="CDD" id="cd11509">
    <property type="entry name" value="SLC6sbd_CT1"/>
    <property type="match status" value="1"/>
</dbReference>
<dbReference type="InterPro" id="IPR000175">
    <property type="entry name" value="Na/ntran_symport"/>
</dbReference>
<dbReference type="InterPro" id="IPR002984">
    <property type="entry name" value="Na/ntran_symport_creatine"/>
</dbReference>
<dbReference type="InterPro" id="IPR037272">
    <property type="entry name" value="SNS_sf"/>
</dbReference>
<dbReference type="PANTHER" id="PTHR11616:SF96">
    <property type="entry name" value="SODIUM- AND CHLORIDE-DEPENDENT CREATINE TRANSPORTER 1"/>
    <property type="match status" value="1"/>
</dbReference>
<dbReference type="PANTHER" id="PTHR11616">
    <property type="entry name" value="SODIUM/CHLORIDE DEPENDENT TRANSPORTER"/>
    <property type="match status" value="1"/>
</dbReference>
<dbReference type="Pfam" id="PF00209">
    <property type="entry name" value="SNF"/>
    <property type="match status" value="1"/>
</dbReference>
<dbReference type="PRINTS" id="PR01199">
    <property type="entry name" value="CRTTRANSPORT"/>
</dbReference>
<dbReference type="PRINTS" id="PR00176">
    <property type="entry name" value="NANEUSMPORT"/>
</dbReference>
<dbReference type="SUPFAM" id="SSF161070">
    <property type="entry name" value="SNF-like"/>
    <property type="match status" value="1"/>
</dbReference>
<dbReference type="PROSITE" id="PS00610">
    <property type="entry name" value="NA_NEUROTRAN_SYMP_1"/>
    <property type="match status" value="1"/>
</dbReference>
<dbReference type="PROSITE" id="PS00754">
    <property type="entry name" value="NA_NEUROTRAN_SYMP_2"/>
    <property type="match status" value="1"/>
</dbReference>
<dbReference type="PROSITE" id="PS50267">
    <property type="entry name" value="NA_NEUROTRAN_SYMP_3"/>
    <property type="match status" value="1"/>
</dbReference>
<keyword id="KW-1003">Cell membrane</keyword>
<keyword id="KW-0325">Glycoprotein</keyword>
<keyword id="KW-0406">Ion transport</keyword>
<keyword id="KW-0472">Membrane</keyword>
<keyword id="KW-0597">Phosphoprotein</keyword>
<keyword id="KW-1185">Reference proteome</keyword>
<keyword id="KW-0915">Sodium</keyword>
<keyword id="KW-0739">Sodium transport</keyword>
<keyword id="KW-0769">Symport</keyword>
<keyword id="KW-0812">Transmembrane</keyword>
<keyword id="KW-1133">Transmembrane helix</keyword>
<keyword id="KW-0813">Transport</keyword>
<proteinExistence type="evidence at protein level"/>
<protein>
    <recommendedName>
        <fullName>Sodium- and chloride-dependent creatine transporter 1</fullName>
        <shortName>CT1</shortName>
        <shortName>Creatine transporter 1</shortName>
    </recommendedName>
    <alternativeName>
        <fullName>Solute carrier family 6 member 8</fullName>
    </alternativeName>
</protein>
<gene>
    <name type="primary">SLC6A8</name>
</gene>
<evidence type="ECO:0000250" key="1">
    <source>
        <dbReference type="UniProtKB" id="P48029"/>
    </source>
</evidence>
<evidence type="ECO:0000250" key="2">
    <source>
        <dbReference type="UniProtKB" id="Q8VBW1"/>
    </source>
</evidence>
<evidence type="ECO:0000255" key="3"/>
<evidence type="ECO:0000256" key="4">
    <source>
        <dbReference type="SAM" id="MobiDB-lite"/>
    </source>
</evidence>
<evidence type="ECO:0000269" key="5">
    <source>
    </source>
</evidence>
<evidence type="ECO:0000305" key="6"/>
<comment type="function">
    <text evidence="2 5">Creatine:sodium symporter which mediates the uptake of creatine (PubMed:8473283). Plays an important role in supplying creatine to the brain via the blood-brain barrier (By similarity).</text>
</comment>
<comment type="catalytic activity">
    <reaction evidence="5">
        <text>creatine(out) + chloride(out) + 2 Na(+)(out) = creatine(in) + chloride(in) + 2 Na(+)(in)</text>
        <dbReference type="Rhea" id="RHEA:71831"/>
        <dbReference type="ChEBI" id="CHEBI:17996"/>
        <dbReference type="ChEBI" id="CHEBI:29101"/>
        <dbReference type="ChEBI" id="CHEBI:57947"/>
    </reaction>
</comment>
<comment type="biophysicochemical properties">
    <kinetics>
        <KM evidence="5">35 uM for creatine</KM>
    </kinetics>
</comment>
<comment type="subcellular location">
    <subcellularLocation>
        <location evidence="1">Cell membrane</location>
        <topology evidence="3">Multi-pass membrane protein</topology>
    </subcellularLocation>
    <subcellularLocation>
        <location evidence="1">Apical cell membrane</location>
        <topology evidence="3">Multi-pass membrane protein</topology>
    </subcellularLocation>
</comment>
<comment type="tissue specificity">
    <text evidence="5">Prominent in kidney, heart, and muscle, also present in brain, but not in liver and intestine.</text>
</comment>
<comment type="PTM">
    <text evidence="2">Glycosylated.</text>
</comment>
<comment type="similarity">
    <text evidence="6">Belongs to the sodium:neurotransmitter symporter (SNF) (TC 2.A.22) family. SLC6A8 subfamily.</text>
</comment>
<name>SC6A8_RABIT</name>